<protein>
    <recommendedName>
        <fullName evidence="1">Large ribosomal subunit protein bL19</fullName>
    </recommendedName>
    <alternativeName>
        <fullName evidence="2">50S ribosomal protein L19</fullName>
    </alternativeName>
</protein>
<keyword id="KW-1185">Reference proteome</keyword>
<keyword id="KW-0687">Ribonucleoprotein</keyword>
<keyword id="KW-0689">Ribosomal protein</keyword>
<reference key="1">
    <citation type="submission" date="2007-10" db="EMBL/GenBank/DDBJ databases">
        <title>Complete sequence of chromosome of Desulforudis audaxviator MP104C.</title>
        <authorList>
            <person name="Copeland A."/>
            <person name="Lucas S."/>
            <person name="Lapidus A."/>
            <person name="Barry K."/>
            <person name="Glavina del Rio T."/>
            <person name="Dalin E."/>
            <person name="Tice H."/>
            <person name="Bruce D."/>
            <person name="Pitluck S."/>
            <person name="Lowry S.R."/>
            <person name="Larimer F."/>
            <person name="Land M.L."/>
            <person name="Hauser L."/>
            <person name="Kyrpides N."/>
            <person name="Ivanova N.N."/>
            <person name="Richardson P."/>
        </authorList>
    </citation>
    <scope>NUCLEOTIDE SEQUENCE [LARGE SCALE GENOMIC DNA]</scope>
    <source>
        <strain>MP104C</strain>
    </source>
</reference>
<sequence length="115" mass="13506">MNHIQTFAEEQLKPDIPEFRPGDTVRVHVKVVEGERQRIQVFEGVVIRRRGGGVSETFTVRRVSYGVGVERTFPLHSPRVDRIEVVRLGRVRRARLYYLRKLRGKAARIRERKTK</sequence>
<accession>B1I2N2</accession>
<evidence type="ECO:0000255" key="1">
    <source>
        <dbReference type="HAMAP-Rule" id="MF_00402"/>
    </source>
</evidence>
<evidence type="ECO:0000305" key="2"/>
<feature type="chain" id="PRO_1000193823" description="Large ribosomal subunit protein bL19">
    <location>
        <begin position="1"/>
        <end position="115"/>
    </location>
</feature>
<name>RL19_DESAP</name>
<dbReference type="EMBL" id="CP000860">
    <property type="protein sequence ID" value="ACA59195.1"/>
    <property type="molecule type" value="Genomic_DNA"/>
</dbReference>
<dbReference type="RefSeq" id="WP_012301783.1">
    <property type="nucleotide sequence ID" value="NC_010424.1"/>
</dbReference>
<dbReference type="SMR" id="B1I2N2"/>
<dbReference type="STRING" id="477974.Daud_0661"/>
<dbReference type="KEGG" id="dau:Daud_0661"/>
<dbReference type="eggNOG" id="COG0335">
    <property type="taxonomic scope" value="Bacteria"/>
</dbReference>
<dbReference type="HOGENOM" id="CLU_103507_2_2_9"/>
<dbReference type="OrthoDB" id="9803541at2"/>
<dbReference type="Proteomes" id="UP000008544">
    <property type="component" value="Chromosome"/>
</dbReference>
<dbReference type="GO" id="GO:0022625">
    <property type="term" value="C:cytosolic large ribosomal subunit"/>
    <property type="evidence" value="ECO:0007669"/>
    <property type="project" value="TreeGrafter"/>
</dbReference>
<dbReference type="GO" id="GO:0003735">
    <property type="term" value="F:structural constituent of ribosome"/>
    <property type="evidence" value="ECO:0007669"/>
    <property type="project" value="InterPro"/>
</dbReference>
<dbReference type="GO" id="GO:0006412">
    <property type="term" value="P:translation"/>
    <property type="evidence" value="ECO:0007669"/>
    <property type="project" value="UniProtKB-UniRule"/>
</dbReference>
<dbReference type="FunFam" id="2.30.30.790:FF:000001">
    <property type="entry name" value="50S ribosomal protein L19"/>
    <property type="match status" value="1"/>
</dbReference>
<dbReference type="Gene3D" id="2.30.30.790">
    <property type="match status" value="1"/>
</dbReference>
<dbReference type="HAMAP" id="MF_00402">
    <property type="entry name" value="Ribosomal_bL19"/>
    <property type="match status" value="1"/>
</dbReference>
<dbReference type="InterPro" id="IPR001857">
    <property type="entry name" value="Ribosomal_bL19"/>
</dbReference>
<dbReference type="InterPro" id="IPR018257">
    <property type="entry name" value="Ribosomal_bL19_CS"/>
</dbReference>
<dbReference type="InterPro" id="IPR038657">
    <property type="entry name" value="Ribosomal_bL19_sf"/>
</dbReference>
<dbReference type="InterPro" id="IPR008991">
    <property type="entry name" value="Translation_prot_SH3-like_sf"/>
</dbReference>
<dbReference type="NCBIfam" id="TIGR01024">
    <property type="entry name" value="rplS_bact"/>
    <property type="match status" value="1"/>
</dbReference>
<dbReference type="PANTHER" id="PTHR15680:SF9">
    <property type="entry name" value="LARGE RIBOSOMAL SUBUNIT PROTEIN BL19M"/>
    <property type="match status" value="1"/>
</dbReference>
<dbReference type="PANTHER" id="PTHR15680">
    <property type="entry name" value="RIBOSOMAL PROTEIN L19"/>
    <property type="match status" value="1"/>
</dbReference>
<dbReference type="Pfam" id="PF01245">
    <property type="entry name" value="Ribosomal_L19"/>
    <property type="match status" value="1"/>
</dbReference>
<dbReference type="PIRSF" id="PIRSF002191">
    <property type="entry name" value="Ribosomal_L19"/>
    <property type="match status" value="1"/>
</dbReference>
<dbReference type="PRINTS" id="PR00061">
    <property type="entry name" value="RIBOSOMALL19"/>
</dbReference>
<dbReference type="SUPFAM" id="SSF50104">
    <property type="entry name" value="Translation proteins SH3-like domain"/>
    <property type="match status" value="1"/>
</dbReference>
<dbReference type="PROSITE" id="PS01015">
    <property type="entry name" value="RIBOSOMAL_L19"/>
    <property type="match status" value="1"/>
</dbReference>
<comment type="function">
    <text evidence="1">This protein is located at the 30S-50S ribosomal subunit interface and may play a role in the structure and function of the aminoacyl-tRNA binding site.</text>
</comment>
<comment type="similarity">
    <text evidence="1">Belongs to the bacterial ribosomal protein bL19 family.</text>
</comment>
<gene>
    <name evidence="1" type="primary">rplS</name>
    <name type="ordered locus">Daud_0661</name>
</gene>
<proteinExistence type="inferred from homology"/>
<organism>
    <name type="scientific">Desulforudis audaxviator (strain MP104C)</name>
    <dbReference type="NCBI Taxonomy" id="477974"/>
    <lineage>
        <taxon>Bacteria</taxon>
        <taxon>Bacillati</taxon>
        <taxon>Bacillota</taxon>
        <taxon>Clostridia</taxon>
        <taxon>Thermoanaerobacterales</taxon>
        <taxon>Candidatus Desulforudaceae</taxon>
        <taxon>Candidatus Desulforudis</taxon>
    </lineage>
</organism>